<dbReference type="EC" id="2.4.2.17" evidence="1"/>
<dbReference type="EMBL" id="CP000720">
    <property type="protein sequence ID" value="ABS47235.1"/>
    <property type="molecule type" value="Genomic_DNA"/>
</dbReference>
<dbReference type="RefSeq" id="WP_002211896.1">
    <property type="nucleotide sequence ID" value="NC_009708.1"/>
</dbReference>
<dbReference type="SMR" id="A7FJG9"/>
<dbReference type="GeneID" id="96665168"/>
<dbReference type="KEGG" id="ypi:YpsIP31758_2428"/>
<dbReference type="HOGENOM" id="CLU_038115_1_0_6"/>
<dbReference type="UniPathway" id="UPA00031">
    <property type="reaction ID" value="UER00006"/>
</dbReference>
<dbReference type="Proteomes" id="UP000002412">
    <property type="component" value="Chromosome"/>
</dbReference>
<dbReference type="GO" id="GO:0005737">
    <property type="term" value="C:cytoplasm"/>
    <property type="evidence" value="ECO:0007669"/>
    <property type="project" value="UniProtKB-SubCell"/>
</dbReference>
<dbReference type="GO" id="GO:0005524">
    <property type="term" value="F:ATP binding"/>
    <property type="evidence" value="ECO:0007669"/>
    <property type="project" value="UniProtKB-KW"/>
</dbReference>
<dbReference type="GO" id="GO:0003879">
    <property type="term" value="F:ATP phosphoribosyltransferase activity"/>
    <property type="evidence" value="ECO:0007669"/>
    <property type="project" value="UniProtKB-UniRule"/>
</dbReference>
<dbReference type="GO" id="GO:0000287">
    <property type="term" value="F:magnesium ion binding"/>
    <property type="evidence" value="ECO:0007669"/>
    <property type="project" value="UniProtKB-UniRule"/>
</dbReference>
<dbReference type="GO" id="GO:0000105">
    <property type="term" value="P:L-histidine biosynthetic process"/>
    <property type="evidence" value="ECO:0007669"/>
    <property type="project" value="UniProtKB-UniRule"/>
</dbReference>
<dbReference type="CDD" id="cd13592">
    <property type="entry name" value="PBP2_HisGL2"/>
    <property type="match status" value="1"/>
</dbReference>
<dbReference type="FunFam" id="3.30.70.120:FF:000002">
    <property type="entry name" value="ATP phosphoribosyltransferase"/>
    <property type="match status" value="1"/>
</dbReference>
<dbReference type="FunFam" id="3.40.190.10:FF:000008">
    <property type="entry name" value="ATP phosphoribosyltransferase"/>
    <property type="match status" value="1"/>
</dbReference>
<dbReference type="Gene3D" id="3.30.70.120">
    <property type="match status" value="1"/>
</dbReference>
<dbReference type="Gene3D" id="3.40.190.10">
    <property type="entry name" value="Periplasmic binding protein-like II"/>
    <property type="match status" value="2"/>
</dbReference>
<dbReference type="HAMAP" id="MF_00079">
    <property type="entry name" value="HisG_Long"/>
    <property type="match status" value="1"/>
</dbReference>
<dbReference type="InterPro" id="IPR020621">
    <property type="entry name" value="ATP-PRT_HisG_long"/>
</dbReference>
<dbReference type="InterPro" id="IPR013820">
    <property type="entry name" value="ATP_PRibTrfase_cat"/>
</dbReference>
<dbReference type="InterPro" id="IPR018198">
    <property type="entry name" value="ATP_PRibTrfase_CS"/>
</dbReference>
<dbReference type="InterPro" id="IPR001348">
    <property type="entry name" value="ATP_PRibTrfase_HisG"/>
</dbReference>
<dbReference type="InterPro" id="IPR013115">
    <property type="entry name" value="HisG_C"/>
</dbReference>
<dbReference type="InterPro" id="IPR011322">
    <property type="entry name" value="N-reg_PII-like_a/b"/>
</dbReference>
<dbReference type="InterPro" id="IPR015867">
    <property type="entry name" value="N-reg_PII/ATP_PRibTrfase_C"/>
</dbReference>
<dbReference type="NCBIfam" id="TIGR00070">
    <property type="entry name" value="hisG"/>
    <property type="match status" value="1"/>
</dbReference>
<dbReference type="NCBIfam" id="TIGR03455">
    <property type="entry name" value="HisG_C-term"/>
    <property type="match status" value="1"/>
</dbReference>
<dbReference type="PANTHER" id="PTHR21403:SF8">
    <property type="entry name" value="ATP PHOSPHORIBOSYLTRANSFERASE"/>
    <property type="match status" value="1"/>
</dbReference>
<dbReference type="PANTHER" id="PTHR21403">
    <property type="entry name" value="ATP PHOSPHORIBOSYLTRANSFERASE ATP-PRTASE"/>
    <property type="match status" value="1"/>
</dbReference>
<dbReference type="Pfam" id="PF01634">
    <property type="entry name" value="HisG"/>
    <property type="match status" value="1"/>
</dbReference>
<dbReference type="Pfam" id="PF08029">
    <property type="entry name" value="HisG_C"/>
    <property type="match status" value="1"/>
</dbReference>
<dbReference type="SUPFAM" id="SSF54913">
    <property type="entry name" value="GlnB-like"/>
    <property type="match status" value="1"/>
</dbReference>
<dbReference type="SUPFAM" id="SSF53850">
    <property type="entry name" value="Periplasmic binding protein-like II"/>
    <property type="match status" value="1"/>
</dbReference>
<dbReference type="PROSITE" id="PS01316">
    <property type="entry name" value="ATP_P_PHORIBOSYLTR"/>
    <property type="match status" value="1"/>
</dbReference>
<gene>
    <name evidence="1" type="primary">hisG</name>
    <name type="ordered locus">YpsIP31758_2428</name>
</gene>
<proteinExistence type="inferred from homology"/>
<comment type="function">
    <text evidence="1">Catalyzes the condensation of ATP and 5-phosphoribose 1-diphosphate to form N'-(5'-phosphoribosyl)-ATP (PR-ATP). Has a crucial role in the pathway because the rate of histidine biosynthesis seems to be controlled primarily by regulation of HisG enzymatic activity.</text>
</comment>
<comment type="catalytic activity">
    <reaction evidence="1">
        <text>1-(5-phospho-beta-D-ribosyl)-ATP + diphosphate = 5-phospho-alpha-D-ribose 1-diphosphate + ATP</text>
        <dbReference type="Rhea" id="RHEA:18473"/>
        <dbReference type="ChEBI" id="CHEBI:30616"/>
        <dbReference type="ChEBI" id="CHEBI:33019"/>
        <dbReference type="ChEBI" id="CHEBI:58017"/>
        <dbReference type="ChEBI" id="CHEBI:73183"/>
        <dbReference type="EC" id="2.4.2.17"/>
    </reaction>
</comment>
<comment type="cofactor">
    <cofactor evidence="1">
        <name>Mg(2+)</name>
        <dbReference type="ChEBI" id="CHEBI:18420"/>
    </cofactor>
</comment>
<comment type="activity regulation">
    <text evidence="1">Feedback inhibited by histidine.</text>
</comment>
<comment type="pathway">
    <text evidence="1">Amino-acid biosynthesis; L-histidine biosynthesis; L-histidine from 5-phospho-alpha-D-ribose 1-diphosphate: step 1/9.</text>
</comment>
<comment type="subunit">
    <text evidence="1">Equilibrium between an active dimeric form, an inactive hexameric form and higher aggregates. Interconversion between the various forms is largely reversible and is influenced by the natural substrates and inhibitors of the enzyme.</text>
</comment>
<comment type="subcellular location">
    <subcellularLocation>
        <location evidence="1">Cytoplasm</location>
    </subcellularLocation>
</comment>
<comment type="similarity">
    <text evidence="1">Belongs to the ATP phosphoribosyltransferase family. Long subfamily.</text>
</comment>
<protein>
    <recommendedName>
        <fullName evidence="1">ATP phosphoribosyltransferase</fullName>
        <shortName evidence="1">ATP-PRT</shortName>
        <shortName evidence="1">ATP-PRTase</shortName>
        <ecNumber evidence="1">2.4.2.17</ecNumber>
    </recommendedName>
</protein>
<keyword id="KW-0028">Amino-acid biosynthesis</keyword>
<keyword id="KW-0067">ATP-binding</keyword>
<keyword id="KW-0963">Cytoplasm</keyword>
<keyword id="KW-0328">Glycosyltransferase</keyword>
<keyword id="KW-0368">Histidine biosynthesis</keyword>
<keyword id="KW-0460">Magnesium</keyword>
<keyword id="KW-0479">Metal-binding</keyword>
<keyword id="KW-0547">Nucleotide-binding</keyword>
<keyword id="KW-0808">Transferase</keyword>
<sequence>MLDKTRLRIAMQKSGRLSDESQELLSRCGIKINLQQQRLIAFAENMPIDILRVRDDDIPGLVMDGVVDLGIIGENVLEEELLNRRAQGDDPRYFTLRRLDFGGCRLSLAAPLDAEYTGPQCLQDTRIATSYPHILKQYLDKQGVRFKSCLLNGSVEVAPRAGLADAICDLVSTGATLEANGLREVEVIYRSKACLIQRDGEMSVDKQQLIDRLMTRIQGVIQARESKYIMMHAPSERLDEIITLLPGAERPTILPLAGDKSRVAMHMVSSETLFWETMEKLKALGASSILVLPIEKMME</sequence>
<feature type="chain" id="PRO_1000057527" description="ATP phosphoribosyltransferase">
    <location>
        <begin position="1"/>
        <end position="299"/>
    </location>
</feature>
<reference key="1">
    <citation type="journal article" date="2007" name="PLoS Genet.">
        <title>The complete genome sequence of Yersinia pseudotuberculosis IP31758, the causative agent of Far East scarlet-like fever.</title>
        <authorList>
            <person name="Eppinger M."/>
            <person name="Rosovitz M.J."/>
            <person name="Fricke W.F."/>
            <person name="Rasko D.A."/>
            <person name="Kokorina G."/>
            <person name="Fayolle C."/>
            <person name="Lindler L.E."/>
            <person name="Carniel E."/>
            <person name="Ravel J."/>
        </authorList>
    </citation>
    <scope>NUCLEOTIDE SEQUENCE [LARGE SCALE GENOMIC DNA]</scope>
    <source>
        <strain>IP 31758</strain>
    </source>
</reference>
<accession>A7FJG9</accession>
<evidence type="ECO:0000255" key="1">
    <source>
        <dbReference type="HAMAP-Rule" id="MF_00079"/>
    </source>
</evidence>
<organism>
    <name type="scientific">Yersinia pseudotuberculosis serotype O:1b (strain IP 31758)</name>
    <dbReference type="NCBI Taxonomy" id="349747"/>
    <lineage>
        <taxon>Bacteria</taxon>
        <taxon>Pseudomonadati</taxon>
        <taxon>Pseudomonadota</taxon>
        <taxon>Gammaproteobacteria</taxon>
        <taxon>Enterobacterales</taxon>
        <taxon>Yersiniaceae</taxon>
        <taxon>Yersinia</taxon>
    </lineage>
</organism>
<name>HIS1_YERP3</name>